<gene>
    <name evidence="1" type="primary">tgt</name>
    <name type="ordered locus">Spro_1061</name>
</gene>
<evidence type="ECO:0000255" key="1">
    <source>
        <dbReference type="HAMAP-Rule" id="MF_00168"/>
    </source>
</evidence>
<keyword id="KW-0328">Glycosyltransferase</keyword>
<keyword id="KW-0479">Metal-binding</keyword>
<keyword id="KW-0671">Queuosine biosynthesis</keyword>
<keyword id="KW-0808">Transferase</keyword>
<keyword id="KW-0819">tRNA processing</keyword>
<keyword id="KW-0862">Zinc</keyword>
<accession>A8GAM5</accession>
<feature type="chain" id="PRO_1000058288" description="Queuine tRNA-ribosyltransferase">
    <location>
        <begin position="1"/>
        <end position="374"/>
    </location>
</feature>
<feature type="region of interest" description="RNA binding" evidence="1">
    <location>
        <begin position="245"/>
        <end position="251"/>
    </location>
</feature>
<feature type="region of interest" description="RNA binding; important for wobble base 34 recognition" evidence="1">
    <location>
        <begin position="269"/>
        <end position="273"/>
    </location>
</feature>
<feature type="active site" description="Proton acceptor" evidence="1">
    <location>
        <position position="89"/>
    </location>
</feature>
<feature type="active site" description="Nucleophile" evidence="1">
    <location>
        <position position="264"/>
    </location>
</feature>
<feature type="binding site" evidence="1">
    <location>
        <begin position="89"/>
        <end position="93"/>
    </location>
    <ligand>
        <name>substrate</name>
    </ligand>
</feature>
<feature type="binding site" evidence="1">
    <location>
        <position position="143"/>
    </location>
    <ligand>
        <name>substrate</name>
    </ligand>
</feature>
<feature type="binding site" evidence="1">
    <location>
        <position position="187"/>
    </location>
    <ligand>
        <name>substrate</name>
    </ligand>
</feature>
<feature type="binding site" evidence="1">
    <location>
        <position position="214"/>
    </location>
    <ligand>
        <name>substrate</name>
    </ligand>
</feature>
<feature type="binding site" evidence="1">
    <location>
        <position position="302"/>
    </location>
    <ligand>
        <name>Zn(2+)</name>
        <dbReference type="ChEBI" id="CHEBI:29105"/>
    </ligand>
</feature>
<feature type="binding site" evidence="1">
    <location>
        <position position="304"/>
    </location>
    <ligand>
        <name>Zn(2+)</name>
        <dbReference type="ChEBI" id="CHEBI:29105"/>
    </ligand>
</feature>
<feature type="binding site" evidence="1">
    <location>
        <position position="307"/>
    </location>
    <ligand>
        <name>Zn(2+)</name>
        <dbReference type="ChEBI" id="CHEBI:29105"/>
    </ligand>
</feature>
<feature type="binding site" evidence="1">
    <location>
        <position position="333"/>
    </location>
    <ligand>
        <name>Zn(2+)</name>
        <dbReference type="ChEBI" id="CHEBI:29105"/>
    </ligand>
</feature>
<proteinExistence type="inferred from homology"/>
<organism>
    <name type="scientific">Serratia proteamaculans (strain 568)</name>
    <dbReference type="NCBI Taxonomy" id="399741"/>
    <lineage>
        <taxon>Bacteria</taxon>
        <taxon>Pseudomonadati</taxon>
        <taxon>Pseudomonadota</taxon>
        <taxon>Gammaproteobacteria</taxon>
        <taxon>Enterobacterales</taxon>
        <taxon>Yersiniaceae</taxon>
        <taxon>Serratia</taxon>
    </lineage>
</organism>
<dbReference type="EC" id="2.4.2.29" evidence="1"/>
<dbReference type="EMBL" id="CP000826">
    <property type="protein sequence ID" value="ABV40165.1"/>
    <property type="molecule type" value="Genomic_DNA"/>
</dbReference>
<dbReference type="SMR" id="A8GAM5"/>
<dbReference type="STRING" id="399741.Spro_1061"/>
<dbReference type="KEGG" id="spe:Spro_1061"/>
<dbReference type="eggNOG" id="COG0343">
    <property type="taxonomic scope" value="Bacteria"/>
</dbReference>
<dbReference type="HOGENOM" id="CLU_022060_0_1_6"/>
<dbReference type="OrthoDB" id="9805417at2"/>
<dbReference type="UniPathway" id="UPA00392"/>
<dbReference type="GO" id="GO:0005829">
    <property type="term" value="C:cytosol"/>
    <property type="evidence" value="ECO:0007669"/>
    <property type="project" value="TreeGrafter"/>
</dbReference>
<dbReference type="GO" id="GO:0046872">
    <property type="term" value="F:metal ion binding"/>
    <property type="evidence" value="ECO:0007669"/>
    <property type="project" value="UniProtKB-KW"/>
</dbReference>
<dbReference type="GO" id="GO:0008479">
    <property type="term" value="F:tRNA-guanosine(34) queuine transglycosylase activity"/>
    <property type="evidence" value="ECO:0007669"/>
    <property type="project" value="UniProtKB-UniRule"/>
</dbReference>
<dbReference type="GO" id="GO:0008616">
    <property type="term" value="P:queuosine biosynthetic process"/>
    <property type="evidence" value="ECO:0007669"/>
    <property type="project" value="UniProtKB-UniRule"/>
</dbReference>
<dbReference type="GO" id="GO:0002099">
    <property type="term" value="P:tRNA wobble guanine modification"/>
    <property type="evidence" value="ECO:0007669"/>
    <property type="project" value="TreeGrafter"/>
</dbReference>
<dbReference type="GO" id="GO:0101030">
    <property type="term" value="P:tRNA-guanine transglycosylation"/>
    <property type="evidence" value="ECO:0007669"/>
    <property type="project" value="InterPro"/>
</dbReference>
<dbReference type="FunFam" id="3.20.20.105:FF:000001">
    <property type="entry name" value="Queuine tRNA-ribosyltransferase"/>
    <property type="match status" value="1"/>
</dbReference>
<dbReference type="Gene3D" id="3.20.20.105">
    <property type="entry name" value="Queuine tRNA-ribosyltransferase-like"/>
    <property type="match status" value="1"/>
</dbReference>
<dbReference type="HAMAP" id="MF_00168">
    <property type="entry name" value="Q_tRNA_Tgt"/>
    <property type="match status" value="1"/>
</dbReference>
<dbReference type="InterPro" id="IPR050076">
    <property type="entry name" value="ArchSynthase1/Queuine_TRR"/>
</dbReference>
<dbReference type="InterPro" id="IPR004803">
    <property type="entry name" value="TGT"/>
</dbReference>
<dbReference type="InterPro" id="IPR036511">
    <property type="entry name" value="TGT-like_sf"/>
</dbReference>
<dbReference type="InterPro" id="IPR002616">
    <property type="entry name" value="tRNA_ribo_trans-like"/>
</dbReference>
<dbReference type="NCBIfam" id="TIGR00430">
    <property type="entry name" value="Q_tRNA_tgt"/>
    <property type="match status" value="1"/>
</dbReference>
<dbReference type="NCBIfam" id="TIGR00449">
    <property type="entry name" value="tgt_general"/>
    <property type="match status" value="1"/>
</dbReference>
<dbReference type="PANTHER" id="PTHR46499">
    <property type="entry name" value="QUEUINE TRNA-RIBOSYLTRANSFERASE"/>
    <property type="match status" value="1"/>
</dbReference>
<dbReference type="PANTHER" id="PTHR46499:SF1">
    <property type="entry name" value="QUEUINE TRNA-RIBOSYLTRANSFERASE"/>
    <property type="match status" value="1"/>
</dbReference>
<dbReference type="Pfam" id="PF01702">
    <property type="entry name" value="TGT"/>
    <property type="match status" value="1"/>
</dbReference>
<dbReference type="SUPFAM" id="SSF51713">
    <property type="entry name" value="tRNA-guanine transglycosylase"/>
    <property type="match status" value="1"/>
</dbReference>
<sequence length="374" mass="42494">MKYELDTTDGRARRGRLIFERGVVETPAFMPVGTYGTVKGMTPEEVKETGAQILLGNTFHLWLRPGQEIMKLHGDLHDFMQWHGPILTDSGGFQVFSLGAMRKIKEEGVHFRNPINGDKVFLSPEKSMEIQYDLGSDIVMIFDECTPYPADWDYAKSSMEMSLRWAQRSRQRFDELNNKNALFGIIQGGVYEDLRDVSVKGLVDIGFDGYAVGGLAVGEPKEDMHRILEHVCPQIPEDKPRYLMGVGKPEDLVEGVRRGIDMFDCVMPTRNARNGHLFVTDGVVKIRNAKHKDDTSPLDKDCDCYTCRNYSRAYLHHLDRCNEILGARLNTIHNLRHYQRLMAGLREAIEQGKLELFVADFYGRIGKPVPPLNA</sequence>
<comment type="function">
    <text evidence="1">Catalyzes the base-exchange of a guanine (G) residue with the queuine precursor 7-aminomethyl-7-deazaguanine (PreQ1) at position 34 (anticodon wobble position) in tRNAs with GU(N) anticodons (tRNA-Asp, -Asn, -His and -Tyr). Catalysis occurs through a double-displacement mechanism. The nucleophile active site attacks the C1' of nucleotide 34 to detach the guanine base from the RNA, forming a covalent enzyme-RNA intermediate. The proton acceptor active site deprotonates the incoming PreQ1, allowing a nucleophilic attack on the C1' of the ribose to form the product. After dissociation, two additional enzymatic reactions on the tRNA convert PreQ1 to queuine (Q), resulting in the hypermodified nucleoside queuosine (7-(((4,5-cis-dihydroxy-2-cyclopenten-1-yl)amino)methyl)-7-deazaguanosine).</text>
</comment>
<comment type="catalytic activity">
    <reaction evidence="1">
        <text>7-aminomethyl-7-carbaguanine + guanosine(34) in tRNA = 7-aminomethyl-7-carbaguanosine(34) in tRNA + guanine</text>
        <dbReference type="Rhea" id="RHEA:24104"/>
        <dbReference type="Rhea" id="RHEA-COMP:10341"/>
        <dbReference type="Rhea" id="RHEA-COMP:10342"/>
        <dbReference type="ChEBI" id="CHEBI:16235"/>
        <dbReference type="ChEBI" id="CHEBI:58703"/>
        <dbReference type="ChEBI" id="CHEBI:74269"/>
        <dbReference type="ChEBI" id="CHEBI:82833"/>
        <dbReference type="EC" id="2.4.2.29"/>
    </reaction>
</comment>
<comment type="cofactor">
    <cofactor evidence="1">
        <name>Zn(2+)</name>
        <dbReference type="ChEBI" id="CHEBI:29105"/>
    </cofactor>
    <text evidence="1">Binds 1 zinc ion per subunit.</text>
</comment>
<comment type="pathway">
    <text evidence="1">tRNA modification; tRNA-queuosine biosynthesis.</text>
</comment>
<comment type="subunit">
    <text evidence="1">Homodimer. Within each dimer, one monomer is responsible for RNA recognition and catalysis, while the other monomer binds to the replacement base PreQ1.</text>
</comment>
<comment type="similarity">
    <text evidence="1">Belongs to the queuine tRNA-ribosyltransferase family.</text>
</comment>
<name>TGT_SERP5</name>
<protein>
    <recommendedName>
        <fullName evidence="1">Queuine tRNA-ribosyltransferase</fullName>
        <ecNumber evidence="1">2.4.2.29</ecNumber>
    </recommendedName>
    <alternativeName>
        <fullName evidence="1">Guanine insertion enzyme</fullName>
    </alternativeName>
    <alternativeName>
        <fullName evidence="1">tRNA-guanine transglycosylase</fullName>
    </alternativeName>
</protein>
<reference key="1">
    <citation type="submission" date="2007-09" db="EMBL/GenBank/DDBJ databases">
        <title>Complete sequence of chromosome of Serratia proteamaculans 568.</title>
        <authorList>
            <consortium name="US DOE Joint Genome Institute"/>
            <person name="Copeland A."/>
            <person name="Lucas S."/>
            <person name="Lapidus A."/>
            <person name="Barry K."/>
            <person name="Glavina del Rio T."/>
            <person name="Dalin E."/>
            <person name="Tice H."/>
            <person name="Pitluck S."/>
            <person name="Chain P."/>
            <person name="Malfatti S."/>
            <person name="Shin M."/>
            <person name="Vergez L."/>
            <person name="Schmutz J."/>
            <person name="Larimer F."/>
            <person name="Land M."/>
            <person name="Hauser L."/>
            <person name="Kyrpides N."/>
            <person name="Kim E."/>
            <person name="Taghavi S."/>
            <person name="Newman L."/>
            <person name="Vangronsveld J."/>
            <person name="van der Lelie D."/>
            <person name="Richardson P."/>
        </authorList>
    </citation>
    <scope>NUCLEOTIDE SEQUENCE [LARGE SCALE GENOMIC DNA]</scope>
    <source>
        <strain>568</strain>
    </source>
</reference>